<protein>
    <recommendedName>
        <fullName evidence="1">Sulfur carrier protein FdhD</fullName>
    </recommendedName>
</protein>
<reference key="1">
    <citation type="journal article" date="2005" name="Proc. Natl. Acad. Sci. U.S.A.">
        <title>The complete genome sequence of Mycobacterium avium subspecies paratuberculosis.</title>
        <authorList>
            <person name="Li L."/>
            <person name="Bannantine J.P."/>
            <person name="Zhang Q."/>
            <person name="Amonsin A."/>
            <person name="May B.J."/>
            <person name="Alt D."/>
            <person name="Banerji N."/>
            <person name="Kanjilal S."/>
            <person name="Kapur V."/>
        </authorList>
    </citation>
    <scope>NUCLEOTIDE SEQUENCE [LARGE SCALE GENOMIC DNA]</scope>
    <source>
        <strain>ATCC BAA-968 / K-10</strain>
    </source>
</reference>
<name>FDHD_MYCPA</name>
<dbReference type="EMBL" id="AE016958">
    <property type="protein sequence ID" value="AAS05283.1"/>
    <property type="molecule type" value="Genomic_DNA"/>
</dbReference>
<dbReference type="RefSeq" id="WP_003878713.1">
    <property type="nucleotide sequence ID" value="NZ_CP106873.1"/>
</dbReference>
<dbReference type="SMR" id="Q73VP7"/>
<dbReference type="STRING" id="262316.MAP_2966c"/>
<dbReference type="KEGG" id="mpa:MAP_2966c"/>
<dbReference type="PATRIC" id="fig|262316.17.peg.3143"/>
<dbReference type="eggNOG" id="COG1526">
    <property type="taxonomic scope" value="Bacteria"/>
</dbReference>
<dbReference type="HOGENOM" id="CLU_056887_3_1_11"/>
<dbReference type="Proteomes" id="UP000000580">
    <property type="component" value="Chromosome"/>
</dbReference>
<dbReference type="GO" id="GO:0005737">
    <property type="term" value="C:cytoplasm"/>
    <property type="evidence" value="ECO:0007669"/>
    <property type="project" value="UniProtKB-SubCell"/>
</dbReference>
<dbReference type="GO" id="GO:0097163">
    <property type="term" value="F:sulfur carrier activity"/>
    <property type="evidence" value="ECO:0007669"/>
    <property type="project" value="UniProtKB-UniRule"/>
</dbReference>
<dbReference type="GO" id="GO:0016783">
    <property type="term" value="F:sulfurtransferase activity"/>
    <property type="evidence" value="ECO:0007669"/>
    <property type="project" value="InterPro"/>
</dbReference>
<dbReference type="GO" id="GO:0006777">
    <property type="term" value="P:Mo-molybdopterin cofactor biosynthetic process"/>
    <property type="evidence" value="ECO:0007669"/>
    <property type="project" value="UniProtKB-UniRule"/>
</dbReference>
<dbReference type="Gene3D" id="3.10.20.10">
    <property type="match status" value="1"/>
</dbReference>
<dbReference type="Gene3D" id="3.40.140.10">
    <property type="entry name" value="Cytidine Deaminase, domain 2"/>
    <property type="match status" value="1"/>
</dbReference>
<dbReference type="HAMAP" id="MF_00187">
    <property type="entry name" value="FdhD"/>
    <property type="match status" value="1"/>
</dbReference>
<dbReference type="InterPro" id="IPR016193">
    <property type="entry name" value="Cytidine_deaminase-like"/>
</dbReference>
<dbReference type="InterPro" id="IPR003786">
    <property type="entry name" value="FdhD"/>
</dbReference>
<dbReference type="NCBIfam" id="TIGR00129">
    <property type="entry name" value="fdhD_narQ"/>
    <property type="match status" value="1"/>
</dbReference>
<dbReference type="NCBIfam" id="NF001943">
    <property type="entry name" value="PRK00724.1-2"/>
    <property type="match status" value="1"/>
</dbReference>
<dbReference type="PANTHER" id="PTHR30592">
    <property type="entry name" value="FORMATE DEHYDROGENASE"/>
    <property type="match status" value="1"/>
</dbReference>
<dbReference type="PANTHER" id="PTHR30592:SF1">
    <property type="entry name" value="SULFUR CARRIER PROTEIN FDHD"/>
    <property type="match status" value="1"/>
</dbReference>
<dbReference type="Pfam" id="PF02634">
    <property type="entry name" value="FdhD-NarQ"/>
    <property type="match status" value="1"/>
</dbReference>
<dbReference type="PIRSF" id="PIRSF015626">
    <property type="entry name" value="FdhD"/>
    <property type="match status" value="1"/>
</dbReference>
<dbReference type="SUPFAM" id="SSF53927">
    <property type="entry name" value="Cytidine deaminase-like"/>
    <property type="match status" value="1"/>
</dbReference>
<organism>
    <name type="scientific">Mycolicibacterium paratuberculosis (strain ATCC BAA-968 / K-10)</name>
    <name type="common">Mycobacterium paratuberculosis</name>
    <dbReference type="NCBI Taxonomy" id="262316"/>
    <lineage>
        <taxon>Bacteria</taxon>
        <taxon>Bacillati</taxon>
        <taxon>Actinomycetota</taxon>
        <taxon>Actinomycetes</taxon>
        <taxon>Mycobacteriales</taxon>
        <taxon>Mycobacteriaceae</taxon>
        <taxon>Mycobacterium</taxon>
        <taxon>Mycobacterium avium complex (MAC)</taxon>
    </lineage>
</organism>
<feature type="chain" id="PRO_0000152911" description="Sulfur carrier protein FdhD">
    <location>
        <begin position="1"/>
        <end position="272"/>
    </location>
</feature>
<feature type="active site" description="Cysteine persulfide intermediate" evidence="1">
    <location>
        <position position="114"/>
    </location>
</feature>
<comment type="function">
    <text evidence="1">Required for formate dehydrogenase (FDH) activity. Acts as a sulfur carrier protein that transfers sulfur from IscS to the molybdenum cofactor prior to its insertion into FDH.</text>
</comment>
<comment type="subcellular location">
    <subcellularLocation>
        <location evidence="1">Cytoplasm</location>
    </subcellularLocation>
</comment>
<comment type="similarity">
    <text evidence="1">Belongs to the FdhD family.</text>
</comment>
<accession>Q73VP7</accession>
<sequence length="272" mass="28736">MQVTSRRRVTHLTAGQAIARPETLVVEEPLEIRVGGAAVTVTMRTPGSDFELAQGFLLTEGIIGAREDVHSIRYCAGCGEDGANSYNVLDVTLAAGLGRPELDVTRNFYTTSSCGVCGKASLEAVRSVSRFSPAADPATVAAATLQAMPHQLRSAQKVFDSTGGLHAAALFRADGTMLVVREDVGRHNAVDKVIGWALEQQRLPLRATVLLVSGRASFELAQKTVMAGIPVLAAVSAPSSLAVSLAEESGVTLVAFLREDSMNIYTRADRIG</sequence>
<evidence type="ECO:0000255" key="1">
    <source>
        <dbReference type="HAMAP-Rule" id="MF_00187"/>
    </source>
</evidence>
<proteinExistence type="inferred from homology"/>
<gene>
    <name evidence="1" type="primary">fdhD</name>
    <name type="ordered locus">MAP_2966c</name>
</gene>
<keyword id="KW-0963">Cytoplasm</keyword>
<keyword id="KW-0501">Molybdenum cofactor biosynthesis</keyword>
<keyword id="KW-1185">Reference proteome</keyword>